<proteinExistence type="inferred from homology"/>
<evidence type="ECO:0000255" key="1">
    <source>
        <dbReference type="HAMAP-Rule" id="MF_01310"/>
    </source>
</evidence>
<evidence type="ECO:0000305" key="2"/>
<sequence>MAKSVRSSKKKVKRVVPDAVAHIYSSFNNTIVTITDRQGNALSWATSGGSGFRGSRKSTPFAAQVAAERAADMALEYGVKNVDVLVKGPGSGRDSAIRALNAKNLKVTSITDVTPLPHNGCRPPKKRRV</sequence>
<dbReference type="EMBL" id="CP000803">
    <property type="protein sequence ID" value="ABU60750.1"/>
    <property type="molecule type" value="Genomic_DNA"/>
</dbReference>
<dbReference type="RefSeq" id="WP_003014376.1">
    <property type="nucleotide sequence ID" value="NC_009749.1"/>
</dbReference>
<dbReference type="SMR" id="A7N9U7"/>
<dbReference type="KEGG" id="fta:FTA_0273"/>
<dbReference type="HOGENOM" id="CLU_072439_5_0_6"/>
<dbReference type="GO" id="GO:1990904">
    <property type="term" value="C:ribonucleoprotein complex"/>
    <property type="evidence" value="ECO:0007669"/>
    <property type="project" value="UniProtKB-KW"/>
</dbReference>
<dbReference type="GO" id="GO:0005840">
    <property type="term" value="C:ribosome"/>
    <property type="evidence" value="ECO:0007669"/>
    <property type="project" value="UniProtKB-KW"/>
</dbReference>
<dbReference type="GO" id="GO:0019843">
    <property type="term" value="F:rRNA binding"/>
    <property type="evidence" value="ECO:0007669"/>
    <property type="project" value="UniProtKB-UniRule"/>
</dbReference>
<dbReference type="GO" id="GO:0003735">
    <property type="term" value="F:structural constituent of ribosome"/>
    <property type="evidence" value="ECO:0007669"/>
    <property type="project" value="InterPro"/>
</dbReference>
<dbReference type="GO" id="GO:0006412">
    <property type="term" value="P:translation"/>
    <property type="evidence" value="ECO:0007669"/>
    <property type="project" value="UniProtKB-UniRule"/>
</dbReference>
<dbReference type="FunFam" id="3.30.420.80:FF:000001">
    <property type="entry name" value="30S ribosomal protein S11"/>
    <property type="match status" value="1"/>
</dbReference>
<dbReference type="Gene3D" id="3.30.420.80">
    <property type="entry name" value="Ribosomal protein S11"/>
    <property type="match status" value="1"/>
</dbReference>
<dbReference type="HAMAP" id="MF_01310">
    <property type="entry name" value="Ribosomal_uS11"/>
    <property type="match status" value="1"/>
</dbReference>
<dbReference type="InterPro" id="IPR001971">
    <property type="entry name" value="Ribosomal_uS11"/>
</dbReference>
<dbReference type="InterPro" id="IPR019981">
    <property type="entry name" value="Ribosomal_uS11_bac-type"/>
</dbReference>
<dbReference type="InterPro" id="IPR018102">
    <property type="entry name" value="Ribosomal_uS11_CS"/>
</dbReference>
<dbReference type="InterPro" id="IPR036967">
    <property type="entry name" value="Ribosomal_uS11_sf"/>
</dbReference>
<dbReference type="NCBIfam" id="NF003698">
    <property type="entry name" value="PRK05309.1"/>
    <property type="match status" value="1"/>
</dbReference>
<dbReference type="NCBIfam" id="TIGR03632">
    <property type="entry name" value="uS11_bact"/>
    <property type="match status" value="1"/>
</dbReference>
<dbReference type="PANTHER" id="PTHR11759">
    <property type="entry name" value="40S RIBOSOMAL PROTEIN S14/30S RIBOSOMAL PROTEIN S11"/>
    <property type="match status" value="1"/>
</dbReference>
<dbReference type="Pfam" id="PF00411">
    <property type="entry name" value="Ribosomal_S11"/>
    <property type="match status" value="1"/>
</dbReference>
<dbReference type="PIRSF" id="PIRSF002131">
    <property type="entry name" value="Ribosomal_S11"/>
    <property type="match status" value="1"/>
</dbReference>
<dbReference type="SUPFAM" id="SSF53137">
    <property type="entry name" value="Translational machinery components"/>
    <property type="match status" value="1"/>
</dbReference>
<dbReference type="PROSITE" id="PS00054">
    <property type="entry name" value="RIBOSOMAL_S11"/>
    <property type="match status" value="1"/>
</dbReference>
<feature type="chain" id="PRO_1000051834" description="Small ribosomal subunit protein uS11">
    <location>
        <begin position="1"/>
        <end position="129"/>
    </location>
</feature>
<comment type="function">
    <text evidence="1">Located on the platform of the 30S subunit, it bridges several disparate RNA helices of the 16S rRNA. Forms part of the Shine-Dalgarno cleft in the 70S ribosome.</text>
</comment>
<comment type="subunit">
    <text evidence="1">Part of the 30S ribosomal subunit. Interacts with proteins S7 and S18. Binds to IF-3.</text>
</comment>
<comment type="similarity">
    <text evidence="1">Belongs to the universal ribosomal protein uS11 family.</text>
</comment>
<organism>
    <name type="scientific">Francisella tularensis subsp. holarctica (strain FTNF002-00 / FTA)</name>
    <dbReference type="NCBI Taxonomy" id="458234"/>
    <lineage>
        <taxon>Bacteria</taxon>
        <taxon>Pseudomonadati</taxon>
        <taxon>Pseudomonadota</taxon>
        <taxon>Gammaproteobacteria</taxon>
        <taxon>Thiotrichales</taxon>
        <taxon>Francisellaceae</taxon>
        <taxon>Francisella</taxon>
    </lineage>
</organism>
<accession>A7N9U7</accession>
<reference key="1">
    <citation type="journal article" date="2009" name="PLoS ONE">
        <title>Complete genome sequence of Francisella tularensis subspecies holarctica FTNF002-00.</title>
        <authorList>
            <person name="Barabote R.D."/>
            <person name="Xie G."/>
            <person name="Brettin T.S."/>
            <person name="Hinrichs S.H."/>
            <person name="Fey P.D."/>
            <person name="Jay J.J."/>
            <person name="Engle J.L."/>
            <person name="Godbole S.D."/>
            <person name="Noronha J.M."/>
            <person name="Scheuermann R.H."/>
            <person name="Zhou L.W."/>
            <person name="Lion C."/>
            <person name="Dempsey M.P."/>
        </authorList>
    </citation>
    <scope>NUCLEOTIDE SEQUENCE [LARGE SCALE GENOMIC DNA]</scope>
    <source>
        <strain>FTNF002-00 / FTA</strain>
    </source>
</reference>
<name>RS11_FRATF</name>
<protein>
    <recommendedName>
        <fullName evidence="1">Small ribosomal subunit protein uS11</fullName>
    </recommendedName>
    <alternativeName>
        <fullName evidence="2">30S ribosomal protein S11</fullName>
    </alternativeName>
</protein>
<keyword id="KW-0687">Ribonucleoprotein</keyword>
<keyword id="KW-0689">Ribosomal protein</keyword>
<keyword id="KW-0694">RNA-binding</keyword>
<keyword id="KW-0699">rRNA-binding</keyword>
<gene>
    <name evidence="1" type="primary">rpsK</name>
    <name type="ordered locus">FTA_0273</name>
</gene>